<name>PUB58_ARATH</name>
<proteinExistence type="inferred from homology"/>
<protein>
    <recommendedName>
        <fullName>Putative U-box domain-containing protein 58</fullName>
        <ecNumber>2.3.2.27</ecNumber>
    </recommendedName>
    <alternativeName>
        <fullName>Plant U-box protein 58</fullName>
    </alternativeName>
    <alternativeName>
        <fullName evidence="3">RING-type E3 ubiquitin transferase PUB58</fullName>
    </alternativeName>
</protein>
<reference key="1">
    <citation type="journal article" date="2000" name="Nature">
        <title>Sequence and analysis of chromosome 1 of the plant Arabidopsis thaliana.</title>
        <authorList>
            <person name="Theologis A."/>
            <person name="Ecker J.R."/>
            <person name="Palm C.J."/>
            <person name="Federspiel N.A."/>
            <person name="Kaul S."/>
            <person name="White O."/>
            <person name="Alonso J."/>
            <person name="Altafi H."/>
            <person name="Araujo R."/>
            <person name="Bowman C.L."/>
            <person name="Brooks S.Y."/>
            <person name="Buehler E."/>
            <person name="Chan A."/>
            <person name="Chao Q."/>
            <person name="Chen H."/>
            <person name="Cheuk R.F."/>
            <person name="Chin C.W."/>
            <person name="Chung M.K."/>
            <person name="Conn L."/>
            <person name="Conway A.B."/>
            <person name="Conway A.R."/>
            <person name="Creasy T.H."/>
            <person name="Dewar K."/>
            <person name="Dunn P."/>
            <person name="Etgu P."/>
            <person name="Feldblyum T.V."/>
            <person name="Feng J.-D."/>
            <person name="Fong B."/>
            <person name="Fujii C.Y."/>
            <person name="Gill J.E."/>
            <person name="Goldsmith A.D."/>
            <person name="Haas B."/>
            <person name="Hansen N.F."/>
            <person name="Hughes B."/>
            <person name="Huizar L."/>
            <person name="Hunter J.L."/>
            <person name="Jenkins J."/>
            <person name="Johnson-Hopson C."/>
            <person name="Khan S."/>
            <person name="Khaykin E."/>
            <person name="Kim C.J."/>
            <person name="Koo H.L."/>
            <person name="Kremenetskaia I."/>
            <person name="Kurtz D.B."/>
            <person name="Kwan A."/>
            <person name="Lam B."/>
            <person name="Langin-Hooper S."/>
            <person name="Lee A."/>
            <person name="Lee J.M."/>
            <person name="Lenz C.A."/>
            <person name="Li J.H."/>
            <person name="Li Y.-P."/>
            <person name="Lin X."/>
            <person name="Liu S.X."/>
            <person name="Liu Z.A."/>
            <person name="Luros J.S."/>
            <person name="Maiti R."/>
            <person name="Marziali A."/>
            <person name="Militscher J."/>
            <person name="Miranda M."/>
            <person name="Nguyen M."/>
            <person name="Nierman W.C."/>
            <person name="Osborne B.I."/>
            <person name="Pai G."/>
            <person name="Peterson J."/>
            <person name="Pham P.K."/>
            <person name="Rizzo M."/>
            <person name="Rooney T."/>
            <person name="Rowley D."/>
            <person name="Sakano H."/>
            <person name="Salzberg S.L."/>
            <person name="Schwartz J.R."/>
            <person name="Shinn P."/>
            <person name="Southwick A.M."/>
            <person name="Sun H."/>
            <person name="Tallon L.J."/>
            <person name="Tambunga G."/>
            <person name="Toriumi M.J."/>
            <person name="Town C.D."/>
            <person name="Utterback T."/>
            <person name="Van Aken S."/>
            <person name="Vaysberg M."/>
            <person name="Vysotskaia V.S."/>
            <person name="Walker M."/>
            <person name="Wu D."/>
            <person name="Yu G."/>
            <person name="Fraser C.M."/>
            <person name="Venter J.C."/>
            <person name="Davis R.W."/>
        </authorList>
    </citation>
    <scope>NUCLEOTIDE SEQUENCE [LARGE SCALE GENOMIC DNA]</scope>
    <source>
        <strain>cv. Columbia</strain>
    </source>
</reference>
<reference key="2">
    <citation type="journal article" date="2017" name="Plant J.">
        <title>Araport11: a complete reannotation of the Arabidopsis thaliana reference genome.</title>
        <authorList>
            <person name="Cheng C.Y."/>
            <person name="Krishnakumar V."/>
            <person name="Chan A.P."/>
            <person name="Thibaud-Nissen F."/>
            <person name="Schobel S."/>
            <person name="Town C.D."/>
        </authorList>
    </citation>
    <scope>GENOME REANNOTATION</scope>
    <source>
        <strain>cv. Columbia</strain>
    </source>
</reference>
<sequence length="420" mass="49531">MVENSYVLFARLCVELFHELPPLPSDESHGDITTFERLFLRKCRIELENASPKTEHLPLVYVDETNYYRFIKTVRVLAEVYKNSKITETTRKSMIQVLMNPILPPERITDAMNLFRSIIGKLADFHFSDEKFNQLVRSSRVVELEGNYNEEVKLRKEAEDALAMKKEDVEMMEQLLESYKEEQGKLQLQAKALEHKLEAELRHRKETETLLAIERDRIEKVKIQLETVENEIDNTRLKAEEFERKYEGEMILRRESEIALEKEKKELEEVKLKLETYEREQENLSSEVRTWQDKYEQESSLRKLSEYALSREQEELQIVKGLLEFYNGEADAMREERDKALKTAKEQMEKRQPPSSFFCPITQEVMKDPHFAADGFTYEAESIRKWLSTGHQTSPMTNLRLSHLTLVPNRALRSAIEELV</sequence>
<feature type="chain" id="PRO_0000322193" description="Putative U-box domain-containing protein 58">
    <location>
        <begin position="1"/>
        <end position="420"/>
    </location>
</feature>
<feature type="domain" description="MIF4G">
    <location>
        <begin position="4"/>
        <end position="168"/>
    </location>
</feature>
<feature type="domain" description="U-box">
    <location>
        <begin position="352"/>
        <end position="420"/>
    </location>
</feature>
<feature type="coiled-coil region" evidence="2">
    <location>
        <begin position="139"/>
        <end position="352"/>
    </location>
</feature>
<evidence type="ECO:0000250" key="1"/>
<evidence type="ECO:0000255" key="2"/>
<evidence type="ECO:0000305" key="3"/>
<dbReference type="EC" id="2.3.2.27"/>
<dbReference type="EMBL" id="AC009894">
    <property type="protein sequence ID" value="AAF02844.1"/>
    <property type="status" value="ALT_SEQ"/>
    <property type="molecule type" value="Genomic_DNA"/>
</dbReference>
<dbReference type="EMBL" id="CP002684">
    <property type="protein sequence ID" value="AEE33334.2"/>
    <property type="molecule type" value="Genomic_DNA"/>
</dbReference>
<dbReference type="PIR" id="F96601">
    <property type="entry name" value="F96601"/>
</dbReference>
<dbReference type="RefSeq" id="NP_176000.5">
    <property type="nucleotide sequence ID" value="NM_104482.5"/>
</dbReference>
<dbReference type="SMR" id="Q9SGT2"/>
<dbReference type="BioGRID" id="27280">
    <property type="interactions" value="1"/>
</dbReference>
<dbReference type="STRING" id="3702.Q9SGT2"/>
<dbReference type="PaxDb" id="3702-AT1G56040.1"/>
<dbReference type="ProteomicsDB" id="226255"/>
<dbReference type="EnsemblPlants" id="AT1G56040.1">
    <property type="protein sequence ID" value="AT1G56040.1"/>
    <property type="gene ID" value="AT1G56040"/>
</dbReference>
<dbReference type="GeneID" id="842055"/>
<dbReference type="Gramene" id="AT1G56040.1">
    <property type="protein sequence ID" value="AT1G56040.1"/>
    <property type="gene ID" value="AT1G56040"/>
</dbReference>
<dbReference type="KEGG" id="ath:AT1G56040"/>
<dbReference type="Araport" id="AT1G56040"/>
<dbReference type="TAIR" id="AT1G56040"/>
<dbReference type="eggNOG" id="ENOG502S95A">
    <property type="taxonomic scope" value="Eukaryota"/>
</dbReference>
<dbReference type="HOGENOM" id="CLU_626068_0_0_1"/>
<dbReference type="InParanoid" id="Q9SGT2"/>
<dbReference type="OMA" id="DCHGEIT"/>
<dbReference type="UniPathway" id="UPA00143"/>
<dbReference type="PRO" id="PR:Q9SGT2"/>
<dbReference type="Proteomes" id="UP000006548">
    <property type="component" value="Chromosome 1"/>
</dbReference>
<dbReference type="ExpressionAtlas" id="Q9SGT2">
    <property type="expression patterns" value="baseline and differential"/>
</dbReference>
<dbReference type="GO" id="GO:0004842">
    <property type="term" value="F:ubiquitin-protein transferase activity"/>
    <property type="evidence" value="ECO:0007669"/>
    <property type="project" value="InterPro"/>
</dbReference>
<dbReference type="GO" id="GO:0016567">
    <property type="term" value="P:protein ubiquitination"/>
    <property type="evidence" value="ECO:0007669"/>
    <property type="project" value="UniProtKB-UniPathway"/>
</dbReference>
<dbReference type="CDD" id="cd16655">
    <property type="entry name" value="RING-Ubox_WDSUB1-like"/>
    <property type="match status" value="1"/>
</dbReference>
<dbReference type="Gene3D" id="3.30.40.10">
    <property type="entry name" value="Zinc/RING finger domain, C3HC4 (zinc finger)"/>
    <property type="match status" value="1"/>
</dbReference>
<dbReference type="InterPro" id="IPR016024">
    <property type="entry name" value="ARM-type_fold"/>
</dbReference>
<dbReference type="InterPro" id="IPR003613">
    <property type="entry name" value="Ubox_domain"/>
</dbReference>
<dbReference type="InterPro" id="IPR052085">
    <property type="entry name" value="WD-SAM-U-box"/>
</dbReference>
<dbReference type="InterPro" id="IPR013083">
    <property type="entry name" value="Znf_RING/FYVE/PHD"/>
</dbReference>
<dbReference type="PANTHER" id="PTHR46573">
    <property type="entry name" value="WD REPEAT, SAM AND U-BOX DOMAIN-CONTAINING PROTEIN 1"/>
    <property type="match status" value="1"/>
</dbReference>
<dbReference type="PANTHER" id="PTHR46573:SF1">
    <property type="entry name" value="WD REPEAT, SAM AND U-BOX DOMAIN-CONTAINING PROTEIN 1"/>
    <property type="match status" value="1"/>
</dbReference>
<dbReference type="Pfam" id="PF04564">
    <property type="entry name" value="U-box"/>
    <property type="match status" value="1"/>
</dbReference>
<dbReference type="SMART" id="SM00504">
    <property type="entry name" value="Ubox"/>
    <property type="match status" value="1"/>
</dbReference>
<dbReference type="SUPFAM" id="SSF48371">
    <property type="entry name" value="ARM repeat"/>
    <property type="match status" value="1"/>
</dbReference>
<dbReference type="SUPFAM" id="SSF57850">
    <property type="entry name" value="RING/U-box"/>
    <property type="match status" value="1"/>
</dbReference>
<dbReference type="PROSITE" id="PS51698">
    <property type="entry name" value="U_BOX"/>
    <property type="match status" value="1"/>
</dbReference>
<comment type="function">
    <text evidence="1">Functions as an E3 ubiquitin ligase.</text>
</comment>
<comment type="catalytic activity">
    <reaction>
        <text>S-ubiquitinyl-[E2 ubiquitin-conjugating enzyme]-L-cysteine + [acceptor protein]-L-lysine = [E2 ubiquitin-conjugating enzyme]-L-cysteine + N(6)-ubiquitinyl-[acceptor protein]-L-lysine.</text>
        <dbReference type="EC" id="2.3.2.27"/>
    </reaction>
</comment>
<comment type="pathway">
    <text>Protein modification; protein ubiquitination.</text>
</comment>
<comment type="sequence caution" evidence="3">
    <conflict type="erroneous gene model prediction">
        <sequence resource="EMBL-CDS" id="AAF02844"/>
    </conflict>
</comment>
<accession>Q9SGT2</accession>
<accession>F4I3I8</accession>
<organism>
    <name type="scientific">Arabidopsis thaliana</name>
    <name type="common">Mouse-ear cress</name>
    <dbReference type="NCBI Taxonomy" id="3702"/>
    <lineage>
        <taxon>Eukaryota</taxon>
        <taxon>Viridiplantae</taxon>
        <taxon>Streptophyta</taxon>
        <taxon>Embryophyta</taxon>
        <taxon>Tracheophyta</taxon>
        <taxon>Spermatophyta</taxon>
        <taxon>Magnoliopsida</taxon>
        <taxon>eudicotyledons</taxon>
        <taxon>Gunneridae</taxon>
        <taxon>Pentapetalae</taxon>
        <taxon>rosids</taxon>
        <taxon>malvids</taxon>
        <taxon>Brassicales</taxon>
        <taxon>Brassicaceae</taxon>
        <taxon>Camelineae</taxon>
        <taxon>Arabidopsis</taxon>
    </lineage>
</organism>
<keyword id="KW-0175">Coiled coil</keyword>
<keyword id="KW-1185">Reference proteome</keyword>
<keyword id="KW-0808">Transferase</keyword>
<keyword id="KW-0833">Ubl conjugation pathway</keyword>
<gene>
    <name type="primary">PUB58</name>
    <name type="ordered locus">At1g56040</name>
    <name type="ORF">T6H22.16</name>
</gene>